<accession>Q5WDF0</accession>
<reference key="1">
    <citation type="submission" date="2003-10" db="EMBL/GenBank/DDBJ databases">
        <title>The complete genome sequence of the alkaliphilic Bacillus clausii KSM-K16.</title>
        <authorList>
            <person name="Takaki Y."/>
            <person name="Kageyama Y."/>
            <person name="Shimamura S."/>
            <person name="Suzuki H."/>
            <person name="Nishi S."/>
            <person name="Hatada Y."/>
            <person name="Kawai S."/>
            <person name="Ito S."/>
            <person name="Horikoshi K."/>
        </authorList>
    </citation>
    <scope>NUCLEOTIDE SEQUENCE [LARGE SCALE GENOMIC DNA]</scope>
    <source>
        <strain>KSM-K16</strain>
    </source>
</reference>
<name>CSRA_SHOC1</name>
<feature type="chain" id="PRO_1000023362" description="Translational regulator CsrA">
    <location>
        <begin position="1"/>
        <end position="79"/>
    </location>
</feature>
<sequence>MLVLSRKAGEAIRIMDDIEIKVLAVEGDQVKLGISAPKSVDVHRGEVYEAIQEENKHAAKPVSAEILQAFINHANKAST</sequence>
<evidence type="ECO:0000255" key="1">
    <source>
        <dbReference type="HAMAP-Rule" id="MF_00167"/>
    </source>
</evidence>
<proteinExistence type="inferred from homology"/>
<comment type="function">
    <text evidence="1">A translational regulator that binds mRNA to regulate translation initiation and/or mRNA stability. Usually binds in the 5'-UTR at or near the Shine-Dalgarno sequence preventing ribosome-binding, thus repressing translation. Its main target seems to be the major flagellin gene, while its function is anatagonized by FliW.</text>
</comment>
<comment type="subunit">
    <text evidence="1">Homodimer; the beta-strands of each monomer intercalate to form a hydrophobic core, while the alpha-helices form wings that extend away from the core.</text>
</comment>
<comment type="subcellular location">
    <subcellularLocation>
        <location evidence="1">Cytoplasm</location>
    </subcellularLocation>
</comment>
<comment type="similarity">
    <text evidence="1">Belongs to the CsrA/RsmA family.</text>
</comment>
<protein>
    <recommendedName>
        <fullName evidence="1">Translational regulator CsrA</fullName>
    </recommendedName>
</protein>
<organism>
    <name type="scientific">Shouchella clausii (strain KSM-K16)</name>
    <name type="common">Alkalihalobacillus clausii</name>
    <dbReference type="NCBI Taxonomy" id="66692"/>
    <lineage>
        <taxon>Bacteria</taxon>
        <taxon>Bacillati</taxon>
        <taxon>Bacillota</taxon>
        <taxon>Bacilli</taxon>
        <taxon>Bacillales</taxon>
        <taxon>Bacillaceae</taxon>
        <taxon>Shouchella</taxon>
    </lineage>
</organism>
<dbReference type="EMBL" id="AP006627">
    <property type="protein sequence ID" value="BAD65610.1"/>
    <property type="molecule type" value="Genomic_DNA"/>
</dbReference>
<dbReference type="RefSeq" id="WP_011247918.1">
    <property type="nucleotide sequence ID" value="NC_006582.1"/>
</dbReference>
<dbReference type="SMR" id="Q5WDF0"/>
<dbReference type="STRING" id="66692.ABC3076"/>
<dbReference type="KEGG" id="bcl:ABC3076"/>
<dbReference type="eggNOG" id="COG1551">
    <property type="taxonomic scope" value="Bacteria"/>
</dbReference>
<dbReference type="HOGENOM" id="CLU_164837_0_2_9"/>
<dbReference type="OrthoDB" id="9809061at2"/>
<dbReference type="Proteomes" id="UP000001168">
    <property type="component" value="Chromosome"/>
</dbReference>
<dbReference type="GO" id="GO:0005829">
    <property type="term" value="C:cytosol"/>
    <property type="evidence" value="ECO:0007669"/>
    <property type="project" value="TreeGrafter"/>
</dbReference>
<dbReference type="GO" id="GO:0048027">
    <property type="term" value="F:mRNA 5'-UTR binding"/>
    <property type="evidence" value="ECO:0007669"/>
    <property type="project" value="UniProtKB-UniRule"/>
</dbReference>
<dbReference type="GO" id="GO:0044781">
    <property type="term" value="P:bacterial-type flagellum organization"/>
    <property type="evidence" value="ECO:0007669"/>
    <property type="project" value="UniProtKB-KW"/>
</dbReference>
<dbReference type="GO" id="GO:0006402">
    <property type="term" value="P:mRNA catabolic process"/>
    <property type="evidence" value="ECO:0007669"/>
    <property type="project" value="InterPro"/>
</dbReference>
<dbReference type="GO" id="GO:0045947">
    <property type="term" value="P:negative regulation of translational initiation"/>
    <property type="evidence" value="ECO:0007669"/>
    <property type="project" value="UniProtKB-UniRule"/>
</dbReference>
<dbReference type="GO" id="GO:1902208">
    <property type="term" value="P:regulation of bacterial-type flagellum assembly"/>
    <property type="evidence" value="ECO:0007669"/>
    <property type="project" value="UniProtKB-UniRule"/>
</dbReference>
<dbReference type="GO" id="GO:0006109">
    <property type="term" value="P:regulation of carbohydrate metabolic process"/>
    <property type="evidence" value="ECO:0007669"/>
    <property type="project" value="InterPro"/>
</dbReference>
<dbReference type="FunFam" id="2.60.40.4380:FF:000002">
    <property type="entry name" value="Translational regulator CsrA"/>
    <property type="match status" value="1"/>
</dbReference>
<dbReference type="Gene3D" id="2.60.40.4380">
    <property type="entry name" value="Translational regulator CsrA"/>
    <property type="match status" value="1"/>
</dbReference>
<dbReference type="HAMAP" id="MF_00167">
    <property type="entry name" value="CsrA"/>
    <property type="match status" value="1"/>
</dbReference>
<dbReference type="InterPro" id="IPR003751">
    <property type="entry name" value="CsrA"/>
</dbReference>
<dbReference type="InterPro" id="IPR036107">
    <property type="entry name" value="CsrA_sf"/>
</dbReference>
<dbReference type="NCBIfam" id="TIGR00202">
    <property type="entry name" value="csrA"/>
    <property type="match status" value="1"/>
</dbReference>
<dbReference type="NCBIfam" id="NF002469">
    <property type="entry name" value="PRK01712.1"/>
    <property type="match status" value="1"/>
</dbReference>
<dbReference type="PANTHER" id="PTHR34984">
    <property type="entry name" value="CARBON STORAGE REGULATOR"/>
    <property type="match status" value="1"/>
</dbReference>
<dbReference type="PANTHER" id="PTHR34984:SF1">
    <property type="entry name" value="CARBON STORAGE REGULATOR"/>
    <property type="match status" value="1"/>
</dbReference>
<dbReference type="Pfam" id="PF02599">
    <property type="entry name" value="CsrA"/>
    <property type="match status" value="1"/>
</dbReference>
<dbReference type="SUPFAM" id="SSF117130">
    <property type="entry name" value="CsrA-like"/>
    <property type="match status" value="1"/>
</dbReference>
<gene>
    <name evidence="1" type="primary">csrA</name>
    <name type="ordered locus">ABC3076</name>
</gene>
<keyword id="KW-1005">Bacterial flagellum biogenesis</keyword>
<keyword id="KW-0963">Cytoplasm</keyword>
<keyword id="KW-1185">Reference proteome</keyword>
<keyword id="KW-0678">Repressor</keyword>
<keyword id="KW-0694">RNA-binding</keyword>
<keyword id="KW-0810">Translation regulation</keyword>